<feature type="initiator methionine" description="Removed" evidence="1">
    <location>
        <position position="1"/>
    </location>
</feature>
<feature type="chain" id="PRO_0000187669" description="Methylcobamide:CoM methyltransferase MtbA">
    <location>
        <begin position="2"/>
        <end position="339"/>
    </location>
</feature>
<feature type="binding site" evidence="1">
    <location>
        <position position="239"/>
    </location>
    <ligand>
        <name>Zn(2+)</name>
        <dbReference type="ChEBI" id="CHEBI:29105"/>
    </ligand>
</feature>
<feature type="binding site" evidence="1">
    <location>
        <position position="241"/>
    </location>
    <ligand>
        <name>Zn(2+)</name>
        <dbReference type="ChEBI" id="CHEBI:29105"/>
    </ligand>
</feature>
<feature type="binding site" evidence="2">
    <location>
        <position position="316"/>
    </location>
    <ligand>
        <name>Zn(2+)</name>
        <dbReference type="ChEBI" id="CHEBI:29105"/>
    </ligand>
</feature>
<comment type="function">
    <text>Methyltransferase involved in methanogenesis from methylamines methanol pathway. Catalyzes the transfer of the methyl group from the methylated corrinoid protein MtmC (MtmC1 or MtmC2) to coenzyme M, forming the substrate for coenzyme-B sulfoethylthiotransferase.</text>
</comment>
<comment type="catalytic activity">
    <reaction>
        <text>methyl-Co(III)-[methylamine-specific corrinoid protein] + coenzyme M = Co(I)-[methylamine-specific corrinoid protein] + methyl-coenzyme M + H(+)</text>
        <dbReference type="Rhea" id="RHEA:18773"/>
        <dbReference type="Rhea" id="RHEA-COMP:11120"/>
        <dbReference type="Rhea" id="RHEA-COMP:11121"/>
        <dbReference type="ChEBI" id="CHEBI:15378"/>
        <dbReference type="ChEBI" id="CHEBI:58286"/>
        <dbReference type="ChEBI" id="CHEBI:58319"/>
        <dbReference type="ChEBI" id="CHEBI:85033"/>
        <dbReference type="ChEBI" id="CHEBI:85035"/>
        <dbReference type="EC" id="2.1.1.247"/>
    </reaction>
</comment>
<comment type="cofactor">
    <cofactor evidence="1">
        <name>Zn(2+)</name>
        <dbReference type="ChEBI" id="CHEBI:29105"/>
    </cofactor>
</comment>
<comment type="pathway">
    <text>One-carbon metabolism; methanogenesis from methylated amine.</text>
</comment>
<comment type="similarity">
    <text evidence="3">Belongs to the uroporphyrinogen decarboxylase family. MtbA/MtaA subfamily.</text>
</comment>
<organism>
    <name type="scientific">Methanosarcina mazei (strain ATCC BAA-159 / DSM 3647 / Goe1 / Go1 / JCM 11833 / OCM 88)</name>
    <name type="common">Methanosarcina frisia</name>
    <dbReference type="NCBI Taxonomy" id="192952"/>
    <lineage>
        <taxon>Archaea</taxon>
        <taxon>Methanobacteriati</taxon>
        <taxon>Methanobacteriota</taxon>
        <taxon>Stenosarchaea group</taxon>
        <taxon>Methanomicrobia</taxon>
        <taxon>Methanosarcinales</taxon>
        <taxon>Methanosarcinaceae</taxon>
        <taxon>Methanosarcina</taxon>
    </lineage>
</organism>
<sequence>MTEYTPKERLYRALRKQPVDRMPAVCFTQTGTVEQMEASGAFWPEAHADAEKMAKLAEAGHTVIGFEAVRVPFDITAEAELFGCGIKAGDLKQQPSVIKHSVKNLEDLDKIKNYSLDTGRIGTILKAVKILSEKYGKELPVIGSMIGPFSLAQHINGDAWFGNLFTGEDIVPALLDFCADFNIAYAKAMVENGADTIAIIDPTASYELIGGEFYEKYALPYQKKIVDAMKELDVATVLHICGNTTNGLAIMDRTGVNAISVDQRVDIKTATGNVENAIIVGNLDPVAVLWNGTPEDVEAASKKVLDAGVGILTVGCGIVSMTPSANLQKMVECAKNYRY</sequence>
<reference key="1">
    <citation type="journal article" date="2002" name="J. Mol. Microbiol. Biotechnol.">
        <title>The genome of Methanosarcina mazei: evidence for lateral gene transfer between Bacteria and Archaea.</title>
        <authorList>
            <person name="Deppenmeier U."/>
            <person name="Johann A."/>
            <person name="Hartsch T."/>
            <person name="Merkl R."/>
            <person name="Schmitz R.A."/>
            <person name="Martinez-Arias R."/>
            <person name="Henne A."/>
            <person name="Wiezer A."/>
            <person name="Baeumer S."/>
            <person name="Jacobi C."/>
            <person name="Brueggemann H."/>
            <person name="Lienard T."/>
            <person name="Christmann A."/>
            <person name="Boemecke M."/>
            <person name="Steckel S."/>
            <person name="Bhattacharyya A."/>
            <person name="Lykidis A."/>
            <person name="Overbeek R."/>
            <person name="Klenk H.-P."/>
            <person name="Gunsalus R.P."/>
            <person name="Fritz H.-J."/>
            <person name="Gottschalk G."/>
        </authorList>
    </citation>
    <scope>NUCLEOTIDE SEQUENCE [LARGE SCALE GENOMIC DNA]</scope>
    <source>
        <strain>ATCC BAA-159 / DSM 3647 / Goe1 / Go1 / JCM 11833 / OCM 88</strain>
    </source>
</reference>
<accession>P58984</accession>
<name>MTBA_METMA</name>
<evidence type="ECO:0000250" key="1"/>
<evidence type="ECO:0000255" key="2"/>
<evidence type="ECO:0000305" key="3"/>
<proteinExistence type="inferred from homology"/>
<gene>
    <name type="primary">mtbA</name>
    <name type="ordered locus">MM_1439</name>
</gene>
<keyword id="KW-0479">Metal-binding</keyword>
<keyword id="KW-0484">Methanogenesis</keyword>
<keyword id="KW-0489">Methyltransferase</keyword>
<keyword id="KW-0808">Transferase</keyword>
<keyword id="KW-0862">Zinc</keyword>
<dbReference type="EC" id="2.1.1.247"/>
<dbReference type="EMBL" id="AE008384">
    <property type="protein sequence ID" value="AAM31135.1"/>
    <property type="molecule type" value="Genomic_DNA"/>
</dbReference>
<dbReference type="RefSeq" id="WP_011033385.1">
    <property type="nucleotide sequence ID" value="NC_003901.1"/>
</dbReference>
<dbReference type="SMR" id="P58984"/>
<dbReference type="GeneID" id="82160481"/>
<dbReference type="KEGG" id="mma:MM_1439"/>
<dbReference type="PATRIC" id="fig|192952.21.peg.1665"/>
<dbReference type="eggNOG" id="arCOG03323">
    <property type="taxonomic scope" value="Archaea"/>
</dbReference>
<dbReference type="HOGENOM" id="CLU_040933_2_1_2"/>
<dbReference type="UniPathway" id="UPA00650"/>
<dbReference type="Proteomes" id="UP000000595">
    <property type="component" value="Chromosome"/>
</dbReference>
<dbReference type="GO" id="GO:0043833">
    <property type="term" value="F:[methyl-Co(III) methylamine-specific corrinoid protein]:coenzyme M methyltransferase activity"/>
    <property type="evidence" value="ECO:0007669"/>
    <property type="project" value="UniProtKB-EC"/>
</dbReference>
<dbReference type="GO" id="GO:0043791">
    <property type="term" value="F:dimethylamine methyltransferase activity"/>
    <property type="evidence" value="ECO:0007669"/>
    <property type="project" value="InterPro"/>
</dbReference>
<dbReference type="GO" id="GO:0046872">
    <property type="term" value="F:metal ion binding"/>
    <property type="evidence" value="ECO:0007669"/>
    <property type="project" value="UniProtKB-KW"/>
</dbReference>
<dbReference type="GO" id="GO:0004853">
    <property type="term" value="F:uroporphyrinogen decarboxylase activity"/>
    <property type="evidence" value="ECO:0007669"/>
    <property type="project" value="InterPro"/>
</dbReference>
<dbReference type="GO" id="GO:2001129">
    <property type="term" value="P:methane biosynthetic process from dimethylamine"/>
    <property type="evidence" value="ECO:0007669"/>
    <property type="project" value="InterPro"/>
</dbReference>
<dbReference type="GO" id="GO:0032259">
    <property type="term" value="P:methylation"/>
    <property type="evidence" value="ECO:0007669"/>
    <property type="project" value="UniProtKB-KW"/>
</dbReference>
<dbReference type="GO" id="GO:0006730">
    <property type="term" value="P:one-carbon metabolic process"/>
    <property type="evidence" value="ECO:0007669"/>
    <property type="project" value="InterPro"/>
</dbReference>
<dbReference type="GO" id="GO:0006779">
    <property type="term" value="P:porphyrin-containing compound biosynthetic process"/>
    <property type="evidence" value="ECO:0007669"/>
    <property type="project" value="InterPro"/>
</dbReference>
<dbReference type="CDD" id="cd03307">
    <property type="entry name" value="Mta_CmuA_like"/>
    <property type="match status" value="1"/>
</dbReference>
<dbReference type="Gene3D" id="3.20.20.210">
    <property type="match status" value="1"/>
</dbReference>
<dbReference type="InterPro" id="IPR052024">
    <property type="entry name" value="Methanogen_methyltrans"/>
</dbReference>
<dbReference type="InterPro" id="IPR048096">
    <property type="entry name" value="Methylcob_mtaseMtbA"/>
</dbReference>
<dbReference type="InterPro" id="IPR006360">
    <property type="entry name" value="Mtase_MtaA_CmuA"/>
</dbReference>
<dbReference type="InterPro" id="IPR038071">
    <property type="entry name" value="UROD/MetE-like_sf"/>
</dbReference>
<dbReference type="InterPro" id="IPR000257">
    <property type="entry name" value="Uroporphyrinogen_deCOase"/>
</dbReference>
<dbReference type="NCBIfam" id="NF041608">
    <property type="entry name" value="methylcob_mtaseMtbA"/>
    <property type="match status" value="1"/>
</dbReference>
<dbReference type="NCBIfam" id="TIGR01463">
    <property type="entry name" value="mtaA_cmuA"/>
    <property type="match status" value="1"/>
</dbReference>
<dbReference type="NCBIfam" id="NF004889">
    <property type="entry name" value="PRK06252.1"/>
    <property type="match status" value="1"/>
</dbReference>
<dbReference type="PANTHER" id="PTHR47099">
    <property type="entry name" value="METHYLCOBAMIDE:COM METHYLTRANSFERASE MTBA"/>
    <property type="match status" value="1"/>
</dbReference>
<dbReference type="PANTHER" id="PTHR47099:SF1">
    <property type="entry name" value="METHYLCOBAMIDE:COM METHYLTRANSFERASE MTBA"/>
    <property type="match status" value="1"/>
</dbReference>
<dbReference type="Pfam" id="PF01208">
    <property type="entry name" value="URO-D"/>
    <property type="match status" value="1"/>
</dbReference>
<dbReference type="SUPFAM" id="SSF51726">
    <property type="entry name" value="UROD/MetE-like"/>
    <property type="match status" value="1"/>
</dbReference>
<protein>
    <recommendedName>
        <fullName>Methylcobamide:CoM methyltransferase MtbA</fullName>
        <ecNumber>2.1.1.247</ecNumber>
    </recommendedName>
    <alternativeName>
        <fullName>MT2-A</fullName>
    </alternativeName>
    <alternativeName>
        <fullName>Methylcobamide:CoM methyltransferase II isozyme A</fullName>
    </alternativeName>
    <alternativeName>
        <fullName>[Methyl-Co(III) methylamine-specific corrinoid protein]:coenzyme M</fullName>
    </alternativeName>
</protein>